<feature type="chain" id="PRO_0000324210" description="Nuclear export protein">
    <location>
        <begin position="1"/>
        <end position="112"/>
    </location>
</feature>
<feature type="short sequence motif" description="Nuclear export signal" evidence="1">
    <location>
        <begin position="9"/>
        <end position="18"/>
    </location>
</feature>
<feature type="short sequence motif" description="Nuclear export signal" evidence="1">
    <location>
        <begin position="82"/>
        <end position="91"/>
    </location>
</feature>
<feature type="non-terminal residue">
    <location>
        <position position="1"/>
    </location>
</feature>
<feature type="non-terminal residue">
    <location>
        <position position="112"/>
    </location>
</feature>
<organism>
    <name type="scientific">Influenza A virus (strain A/Equine/London/1416/1973 H7N7)</name>
    <dbReference type="NCBI Taxonomy" id="380340"/>
    <lineage>
        <taxon>Viruses</taxon>
        <taxon>Riboviria</taxon>
        <taxon>Orthornavirae</taxon>
        <taxon>Negarnaviricota</taxon>
        <taxon>Polyploviricotina</taxon>
        <taxon>Insthoviricetes</taxon>
        <taxon>Articulavirales</taxon>
        <taxon>Orthomyxoviridae</taxon>
        <taxon>Alphainfluenzavirus</taxon>
        <taxon>Alphainfluenzavirus influenzae</taxon>
        <taxon>Influenza A virus</taxon>
    </lineage>
</organism>
<name>NEP_I73A4</name>
<gene>
    <name type="primary">NS</name>
</gene>
<sequence>NTVSSFQDILMRMSKMQLGSSSEDLNGMITQLESLKLYRDSLGEAVMRMGDLHSLQSRNEKWREQLSQKFEEIRWLIEEVRHRLKNTENSFEQITFMQALQLLLEVEQEIRT</sequence>
<protein>
    <recommendedName>
        <fullName>Nuclear export protein</fullName>
        <shortName>NEP</shortName>
    </recommendedName>
    <alternativeName>
        <fullName>Non structural protein 2</fullName>
        <shortName>NS2</shortName>
    </alternativeName>
</protein>
<accession>O09686</accession>
<evidence type="ECO:0000250" key="1"/>
<evidence type="ECO:0000305" key="2"/>
<comment type="function">
    <text evidence="1">Mediates the nuclear export of encapsidated genomic RNAs (ribonucleoproteins, RNPs). Acts as an adapter between viral RNPs complexes and the nuclear export machinery of the cell. Possesses no intrinsic RNA-binding activity, but includes a C-terminal M1-binding domain. This domain is believed to allow recognition of RNPs to which the M1 protein is bound. Because the M1 protein is not available in large quantities until the later stages of infection, such an indirect recognition mechanism probably ensures that genomic RNPs are not exported from the nucleus before sufficient quantities of viral mRNA and progeny genomic RNA have been synthesized. Furthermore, the RNPs enters the cytoplasm only when they have associated with the M1 protein that is necessary to guide them to the plasma membrane. May down-regulate viral RNA synthesis when overproduced (By similarity).</text>
</comment>
<comment type="subunit">
    <text evidence="1">Binds M1 protein. May interact with human nucleoporin RAB/HRB and exportin XPO1/CRM1 (By similarity).</text>
</comment>
<comment type="subcellular location">
    <subcellularLocation>
        <location evidence="2">Virion</location>
    </subcellularLocation>
    <subcellularLocation>
        <location evidence="1">Host nucleus</location>
    </subcellularLocation>
</comment>
<comment type="alternative products">
    <event type="alternative splicing"/>
    <isoform>
        <id>O09686-1</id>
        <name>NEP</name>
        <name>NS2</name>
        <sequence type="displayed"/>
    </isoform>
    <isoform>
        <id>O09687-1</id>
        <name>NS1</name>
        <sequence type="external"/>
    </isoform>
</comment>
<comment type="similarity">
    <text evidence="2">Belongs to the influenza viruses NEP family.</text>
</comment>
<organismHost>
    <name type="scientific">Aves</name>
    <dbReference type="NCBI Taxonomy" id="8782"/>
</organismHost>
<organismHost>
    <name type="scientific">Equus caballus</name>
    <name type="common">Horse</name>
    <dbReference type="NCBI Taxonomy" id="9796"/>
</organismHost>
<organismHost>
    <name type="scientific">Homo sapiens</name>
    <name type="common">Human</name>
    <dbReference type="NCBI Taxonomy" id="9606"/>
</organismHost>
<organismHost>
    <name type="scientific">Phocidae</name>
    <name type="common">true seals</name>
    <dbReference type="NCBI Taxonomy" id="9709"/>
</organismHost>
<keyword id="KW-0025">Alternative splicing</keyword>
<keyword id="KW-1048">Host nucleus</keyword>
<keyword id="KW-0945">Host-virus interaction</keyword>
<keyword id="KW-0813">Transport</keyword>
<keyword id="KW-0946">Virion</keyword>
<proteinExistence type="inferred from homology"/>
<dbReference type="EMBL" id="U49486">
    <property type="protein sequence ID" value="AAB51000.1"/>
    <property type="molecule type" value="Genomic_RNA"/>
</dbReference>
<dbReference type="SMR" id="O09686"/>
<dbReference type="GO" id="GO:0042025">
    <property type="term" value="C:host cell nucleus"/>
    <property type="evidence" value="ECO:0007669"/>
    <property type="project" value="UniProtKB-SubCell"/>
</dbReference>
<dbReference type="GO" id="GO:0044423">
    <property type="term" value="C:virion component"/>
    <property type="evidence" value="ECO:0007669"/>
    <property type="project" value="UniProtKB-KW"/>
</dbReference>
<dbReference type="GO" id="GO:0039675">
    <property type="term" value="P:exit of virus from host cell nucleus through nuclear pore"/>
    <property type="evidence" value="ECO:0007669"/>
    <property type="project" value="InterPro"/>
</dbReference>
<dbReference type="Gene3D" id="1.10.287.230">
    <property type="match status" value="1"/>
</dbReference>
<dbReference type="InterPro" id="IPR000968">
    <property type="entry name" value="Flu_NS2"/>
</dbReference>
<dbReference type="Pfam" id="PF00601">
    <property type="entry name" value="Flu_NS2"/>
    <property type="match status" value="1"/>
</dbReference>
<dbReference type="SUPFAM" id="SSF101156">
    <property type="entry name" value="Nonstructural protein ns2, Nep, M1-binding domain"/>
    <property type="match status" value="1"/>
</dbReference>
<reference key="1">
    <citation type="journal article" date="1996" name="J. Virol.">
        <title>Emergence of avian H1N1 influenza viruses in pigs in China.</title>
        <authorList>
            <person name="Guan Y."/>
            <person name="Shortridge K.F."/>
            <person name="Krauss S."/>
            <person name="Li P.H."/>
            <person name="Kawaoka Y."/>
            <person name="Webster R.G."/>
        </authorList>
    </citation>
    <scope>NUCLEOTIDE SEQUENCE [GENOMIC RNA]</scope>
</reference>